<organism>
    <name type="scientific">Methanococcus maripaludis (strain C5 / ATCC BAA-1333)</name>
    <dbReference type="NCBI Taxonomy" id="402880"/>
    <lineage>
        <taxon>Archaea</taxon>
        <taxon>Methanobacteriati</taxon>
        <taxon>Methanobacteriota</taxon>
        <taxon>Methanomada group</taxon>
        <taxon>Methanococci</taxon>
        <taxon>Methanococcales</taxon>
        <taxon>Methanococcaceae</taxon>
        <taxon>Methanococcus</taxon>
    </lineage>
</organism>
<evidence type="ECO:0000255" key="1">
    <source>
        <dbReference type="HAMAP-Rule" id="MF_00112"/>
    </source>
</evidence>
<accession>A4G0J0</accession>
<proteinExistence type="inferred from homology"/>
<dbReference type="EC" id="2.5.1.41" evidence="1"/>
<dbReference type="EMBL" id="CP000609">
    <property type="protein sequence ID" value="ABO35974.1"/>
    <property type="molecule type" value="Genomic_DNA"/>
</dbReference>
<dbReference type="RefSeq" id="WP_011869421.1">
    <property type="nucleotide sequence ID" value="NC_009135.1"/>
</dbReference>
<dbReference type="SMR" id="A4G0J0"/>
<dbReference type="STRING" id="402880.MmarC5_1677"/>
<dbReference type="GeneID" id="4929352"/>
<dbReference type="KEGG" id="mmq:MmarC5_1677"/>
<dbReference type="eggNOG" id="arCOG01085">
    <property type="taxonomic scope" value="Archaea"/>
</dbReference>
<dbReference type="HOGENOM" id="CLU_068610_0_0_2"/>
<dbReference type="OrthoDB" id="7409at2157"/>
<dbReference type="UniPathway" id="UPA00940"/>
<dbReference type="Proteomes" id="UP000000253">
    <property type="component" value="Chromosome"/>
</dbReference>
<dbReference type="GO" id="GO:0005737">
    <property type="term" value="C:cytoplasm"/>
    <property type="evidence" value="ECO:0007669"/>
    <property type="project" value="UniProtKB-SubCell"/>
</dbReference>
<dbReference type="GO" id="GO:0000107">
    <property type="term" value="F:imidazoleglycerol-phosphate synthase activity"/>
    <property type="evidence" value="ECO:0007669"/>
    <property type="project" value="TreeGrafter"/>
</dbReference>
<dbReference type="GO" id="GO:0000287">
    <property type="term" value="F:magnesium ion binding"/>
    <property type="evidence" value="ECO:0007669"/>
    <property type="project" value="UniProtKB-UniRule"/>
</dbReference>
<dbReference type="GO" id="GO:0047294">
    <property type="term" value="F:phosphoglycerol geranylgeranyltransferase activity"/>
    <property type="evidence" value="ECO:0007669"/>
    <property type="project" value="UniProtKB-UniRule"/>
</dbReference>
<dbReference type="GO" id="GO:0046474">
    <property type="term" value="P:glycerophospholipid biosynthetic process"/>
    <property type="evidence" value="ECO:0007669"/>
    <property type="project" value="UniProtKB-UniRule"/>
</dbReference>
<dbReference type="Gene3D" id="3.20.20.390">
    <property type="entry name" value="FMN-linked oxidoreductases"/>
    <property type="match status" value="1"/>
</dbReference>
<dbReference type="HAMAP" id="MF_00112">
    <property type="entry name" value="GGGP_HepGP_synthase"/>
    <property type="match status" value="1"/>
</dbReference>
<dbReference type="InterPro" id="IPR038597">
    <property type="entry name" value="GGGP/HepGP_synthase_sf"/>
</dbReference>
<dbReference type="InterPro" id="IPR008205">
    <property type="entry name" value="GGGP_HepGP_synthase"/>
</dbReference>
<dbReference type="InterPro" id="IPR010946">
    <property type="entry name" value="GGGP_synth"/>
</dbReference>
<dbReference type="InterPro" id="IPR050064">
    <property type="entry name" value="IGPS_HisA/HisF"/>
</dbReference>
<dbReference type="NCBIfam" id="TIGR01769">
    <property type="entry name" value="GGGP"/>
    <property type="match status" value="1"/>
</dbReference>
<dbReference type="NCBIfam" id="TIGR01768">
    <property type="entry name" value="GGGP-family"/>
    <property type="match status" value="1"/>
</dbReference>
<dbReference type="NCBIfam" id="NF003198">
    <property type="entry name" value="PRK04169.1-2"/>
    <property type="match status" value="1"/>
</dbReference>
<dbReference type="NCBIfam" id="NF003201">
    <property type="entry name" value="PRK04169.1-5"/>
    <property type="match status" value="1"/>
</dbReference>
<dbReference type="PANTHER" id="PTHR21235:SF22">
    <property type="entry name" value="GERANYLGERANYLGLYCERYL PHOSPHATE SYNTHASE"/>
    <property type="match status" value="1"/>
</dbReference>
<dbReference type="PANTHER" id="PTHR21235">
    <property type="entry name" value="IMIDAZOLE GLYCEROL PHOSPHATE SYNTHASE SUBUNIT HISF/H IGP SYNTHASE SUBUNIT HISF/H"/>
    <property type="match status" value="1"/>
</dbReference>
<dbReference type="Pfam" id="PF01884">
    <property type="entry name" value="PcrB"/>
    <property type="match status" value="1"/>
</dbReference>
<dbReference type="SUPFAM" id="SSF51395">
    <property type="entry name" value="FMN-linked oxidoreductases"/>
    <property type="match status" value="1"/>
</dbReference>
<name>GGGPS_METM5</name>
<protein>
    <recommendedName>
        <fullName evidence="1">Geranylgeranylglyceryl phosphate synthase</fullName>
        <shortName evidence="1">GGGP synthase</shortName>
        <shortName evidence="1">GGGPS</shortName>
        <ecNumber evidence="1">2.5.1.41</ecNumber>
    </recommendedName>
    <alternativeName>
        <fullName evidence="1">(S)-3-O-geranylgeranylglyceryl phosphate synthase</fullName>
    </alternativeName>
    <alternativeName>
        <fullName evidence="1">Phosphoglycerol geranylgeranyltransferase</fullName>
    </alternativeName>
</protein>
<sequence>MQIKIGEIESKLNNIIEEEGAAYFVLIDPDEKNYREIANHVKDYADAIIIGGSIGIINLDEVTKEIKEITGLPVILFPGNVDGVTKEADAVLFMSLMNSKNTYWNMTAPTLGALTIKKYGLETLPMAYLGIEPISKTAVGFVGEVNEIPQKKPEIAGIYSLSASYFGMRWVYLEAGSGAEYPVNNEMIGVSKKLSGINIIVGGGIRTPEVAYEKVMSGADVIVTGTLTEKDPKAVEEMKKAIKKAGMDKLKMLSKK</sequence>
<feature type="chain" id="PRO_1000015165" description="Geranylgeranylglyceryl phosphate synthase">
    <location>
        <begin position="1"/>
        <end position="256"/>
    </location>
</feature>
<feature type="binding site" evidence="1">
    <location>
        <position position="28"/>
    </location>
    <ligand>
        <name>Mg(2+)</name>
        <dbReference type="ChEBI" id="CHEBI:18420"/>
    </ligand>
</feature>
<feature type="binding site" evidence="1">
    <location>
        <position position="53"/>
    </location>
    <ligand>
        <name>Mg(2+)</name>
        <dbReference type="ChEBI" id="CHEBI:18420"/>
    </ligand>
</feature>
<feature type="binding site" evidence="1">
    <location>
        <begin position="172"/>
        <end position="178"/>
    </location>
    <ligand>
        <name>sn-glycerol 1-phosphate</name>
        <dbReference type="ChEBI" id="CHEBI:57685"/>
    </ligand>
</feature>
<feature type="binding site" evidence="1">
    <location>
        <begin position="203"/>
        <end position="204"/>
    </location>
    <ligand>
        <name>sn-glycerol 1-phosphate</name>
        <dbReference type="ChEBI" id="CHEBI:57685"/>
    </ligand>
</feature>
<feature type="binding site" evidence="1">
    <location>
        <begin position="225"/>
        <end position="226"/>
    </location>
    <ligand>
        <name>sn-glycerol 1-phosphate</name>
        <dbReference type="ChEBI" id="CHEBI:57685"/>
    </ligand>
</feature>
<comment type="function">
    <text evidence="1">Prenyltransferase that catalyzes the transfer of the geranylgeranyl moiety of geranylgeranyl diphosphate (GGPP) to the C3 hydroxyl of sn-glycerol-1-phosphate (G1P). This reaction is the first ether-bond-formation step in the biosynthesis of archaeal membrane lipids.</text>
</comment>
<comment type="catalytic activity">
    <reaction evidence="1">
        <text>sn-glycerol 1-phosphate + (2E,6E,10E)-geranylgeranyl diphosphate = sn-3-O-(geranylgeranyl)glycerol 1-phosphate + diphosphate</text>
        <dbReference type="Rhea" id="RHEA:23404"/>
        <dbReference type="ChEBI" id="CHEBI:33019"/>
        <dbReference type="ChEBI" id="CHEBI:57677"/>
        <dbReference type="ChEBI" id="CHEBI:57685"/>
        <dbReference type="ChEBI" id="CHEBI:58756"/>
        <dbReference type="EC" id="2.5.1.41"/>
    </reaction>
</comment>
<comment type="cofactor">
    <cofactor evidence="1">
        <name>Mg(2+)</name>
        <dbReference type="ChEBI" id="CHEBI:18420"/>
    </cofactor>
</comment>
<comment type="pathway">
    <text evidence="1">Membrane lipid metabolism; glycerophospholipid metabolism.</text>
</comment>
<comment type="subcellular location">
    <subcellularLocation>
        <location evidence="1">Cytoplasm</location>
    </subcellularLocation>
</comment>
<comment type="similarity">
    <text evidence="1">Belongs to the GGGP/HepGP synthase family. Group II subfamily.</text>
</comment>
<gene>
    <name type="ordered locus">MmarC5_1677</name>
</gene>
<reference key="1">
    <citation type="submission" date="2007-03" db="EMBL/GenBank/DDBJ databases">
        <title>Complete sequence of chromosome of Methanococcus maripaludis C5.</title>
        <authorList>
            <consortium name="US DOE Joint Genome Institute"/>
            <person name="Copeland A."/>
            <person name="Lucas S."/>
            <person name="Lapidus A."/>
            <person name="Barry K."/>
            <person name="Glavina del Rio T."/>
            <person name="Dalin E."/>
            <person name="Tice H."/>
            <person name="Pitluck S."/>
            <person name="Chertkov O."/>
            <person name="Brettin T."/>
            <person name="Bruce D."/>
            <person name="Han C."/>
            <person name="Detter J.C."/>
            <person name="Schmutz J."/>
            <person name="Larimer F."/>
            <person name="Land M."/>
            <person name="Hauser L."/>
            <person name="Kyrpides N."/>
            <person name="Mikhailova N."/>
            <person name="Sieprawska-Lupa M."/>
            <person name="Whitman W.B."/>
            <person name="Richardson P."/>
        </authorList>
    </citation>
    <scope>NUCLEOTIDE SEQUENCE [LARGE SCALE GENOMIC DNA]</scope>
    <source>
        <strain>C5 / ATCC BAA-1333</strain>
    </source>
</reference>
<keyword id="KW-0963">Cytoplasm</keyword>
<keyword id="KW-0444">Lipid biosynthesis</keyword>
<keyword id="KW-0443">Lipid metabolism</keyword>
<keyword id="KW-0460">Magnesium</keyword>
<keyword id="KW-0479">Metal-binding</keyword>
<keyword id="KW-0594">Phospholipid biosynthesis</keyword>
<keyword id="KW-1208">Phospholipid metabolism</keyword>
<keyword id="KW-0808">Transferase</keyword>